<keyword id="KW-0062">Aspartic protease inhibitor</keyword>
<keyword id="KW-1015">Disulfide bond</keyword>
<keyword id="KW-0646">Protease inhibitor</keyword>
<keyword id="KW-0964">Secreted</keyword>
<keyword id="KW-0732">Signal</keyword>
<proteinExistence type="inferred from homology"/>
<comment type="function">
    <text evidence="4">Aspartyl protease inhibitor.</text>
</comment>
<comment type="subcellular location">
    <subcellularLocation>
        <location>Secreted</location>
    </subcellularLocation>
</comment>
<comment type="similarity">
    <text evidence="4">Belongs to the protease inhibitor I33 family.</text>
</comment>
<protein>
    <recommendedName>
        <fullName>Filarial antigen Av33</fullName>
    </recommendedName>
</protein>
<accession>Q9TXA7</accession>
<reference key="1">
    <citation type="journal article" date="1993" name="Mol. Biochem. Parasitol.">
        <title>The filarial antigens Av33/Ov33-3 show striking similarities to the major pepsin inhibitor from Ascaris suum.</title>
        <authorList>
            <person name="Willenbucher J."/>
            <person name="Hofle W."/>
            <person name="Lucius R."/>
        </authorList>
    </citation>
    <scope>NUCLEOTIDE SEQUENCE</scope>
</reference>
<name>API_ACAVI</name>
<feature type="signal peptide" evidence="2">
    <location>
        <begin position="1"/>
        <end position="17"/>
    </location>
</feature>
<feature type="chain" id="PRO_0000002395" description="Filarial antigen Av33">
    <location>
        <begin position="18"/>
        <end position="234"/>
    </location>
</feature>
<feature type="region of interest" description="Disordered" evidence="3">
    <location>
        <begin position="204"/>
        <end position="234"/>
    </location>
</feature>
<feature type="compositionally biased region" description="Low complexity" evidence="3">
    <location>
        <begin position="211"/>
        <end position="220"/>
    </location>
</feature>
<feature type="disulfide bond" evidence="1">
    <location>
        <begin position="135"/>
        <end position="230"/>
    </location>
</feature>
<dbReference type="PIR" id="A48577">
    <property type="entry name" value="A48577"/>
</dbReference>
<dbReference type="SMR" id="Q9TXA7"/>
<dbReference type="MEROPS" id="I33.002"/>
<dbReference type="GO" id="GO:0005576">
    <property type="term" value="C:extracellular region"/>
    <property type="evidence" value="ECO:0007669"/>
    <property type="project" value="UniProtKB-SubCell"/>
</dbReference>
<dbReference type="GO" id="GO:0019828">
    <property type="term" value="F:aspartic-type endopeptidase inhibitor activity"/>
    <property type="evidence" value="ECO:0007669"/>
    <property type="project" value="UniProtKB-KW"/>
</dbReference>
<dbReference type="CDD" id="cd00225">
    <property type="entry name" value="API3"/>
    <property type="match status" value="1"/>
</dbReference>
<dbReference type="Gene3D" id="3.30.1120.50">
    <property type="entry name" value="Pepsin inhibitor-3"/>
    <property type="match status" value="2"/>
</dbReference>
<dbReference type="InterPro" id="IPR010480">
    <property type="entry name" value="Pepsin-I3"/>
</dbReference>
<dbReference type="InterPro" id="IPR038412">
    <property type="entry name" value="Pepsin-I3_sf"/>
</dbReference>
<dbReference type="InterPro" id="IPR051901">
    <property type="entry name" value="Protease_Inhibitor_I33"/>
</dbReference>
<dbReference type="PANTHER" id="PTHR37969">
    <property type="entry name" value="PROTEIN CBG07421-RELATED"/>
    <property type="match status" value="1"/>
</dbReference>
<dbReference type="PANTHER" id="PTHR37969:SF1">
    <property type="entry name" value="PROTEIN CBG13105"/>
    <property type="match status" value="1"/>
</dbReference>
<dbReference type="Pfam" id="PF06394">
    <property type="entry name" value="Pepsin-I3"/>
    <property type="match status" value="2"/>
</dbReference>
<dbReference type="SUPFAM" id="SSF55149">
    <property type="entry name" value="Pepsin inhibitor-3"/>
    <property type="match status" value="1"/>
</dbReference>
<sequence>MKILSCLLLCTITVLEGNVMNRHNKRFAGFNVAGIGGTAGCVVVDNKLFANGFFLRELTAEEQREFAQYVEESNKYKEELKVSLEERRKGWQIARQSEKGAKILSTITEKNLPKPPKKPSFCTAADTTQYYFDGCMVQNNKIFVGQSYVRDLTADEAKELKSFDVKMTAYQKYLSSSIQQQMNSLFGDKTNLLNLFTNTHLESTSQASEATTIPTTTQTPVEAPETPSFCVPIY</sequence>
<organism>
    <name type="scientific">Acanthocheilonema viteae</name>
    <name type="common">Filarial nematode worm</name>
    <name type="synonym">Dipetalonema viteae</name>
    <dbReference type="NCBI Taxonomy" id="6277"/>
    <lineage>
        <taxon>Eukaryota</taxon>
        <taxon>Metazoa</taxon>
        <taxon>Ecdysozoa</taxon>
        <taxon>Nematoda</taxon>
        <taxon>Chromadorea</taxon>
        <taxon>Rhabditida</taxon>
        <taxon>Spirurina</taxon>
        <taxon>Spiruromorpha</taxon>
        <taxon>Filarioidea</taxon>
        <taxon>Onchocercidae</taxon>
        <taxon>Acanthocheilonema</taxon>
    </lineage>
</organism>
<evidence type="ECO:0000250" key="1"/>
<evidence type="ECO:0000255" key="2"/>
<evidence type="ECO:0000256" key="3">
    <source>
        <dbReference type="SAM" id="MobiDB-lite"/>
    </source>
</evidence>
<evidence type="ECO:0000305" key="4"/>